<accession>Q06SG5</accession>
<keyword id="KW-0150">Chloroplast</keyword>
<keyword id="KW-0934">Plastid</keyword>
<keyword id="KW-0687">Ribonucleoprotein</keyword>
<keyword id="KW-0689">Ribosomal protein</keyword>
<keyword id="KW-0694">RNA-binding</keyword>
<keyword id="KW-0699">rRNA-binding</keyword>
<protein>
    <recommendedName>
        <fullName evidence="2">Small ribosomal subunit protein uS7c</fullName>
    </recommendedName>
    <alternativeName>
        <fullName>30S ribosomal protein S7, chloroplastic</fullName>
    </alternativeName>
</protein>
<proteinExistence type="inferred from homology"/>
<feature type="chain" id="PRO_0000277061" description="Small ribosomal subunit protein uS7c">
    <location>
        <begin position="1"/>
        <end position="174"/>
    </location>
</feature>
<organism>
    <name type="scientific">Stigeoclonium helveticum</name>
    <name type="common">Green alga</name>
    <dbReference type="NCBI Taxonomy" id="55999"/>
    <lineage>
        <taxon>Eukaryota</taxon>
        <taxon>Viridiplantae</taxon>
        <taxon>Chlorophyta</taxon>
        <taxon>core chlorophytes</taxon>
        <taxon>Chlorophyceae</taxon>
        <taxon>OCC clade</taxon>
        <taxon>Chaetophorales</taxon>
        <taxon>Chaetophoraceae</taxon>
        <taxon>Stigeoclonium</taxon>
    </lineage>
</organism>
<name>RR7_STIHE</name>
<sequence length="174" mass="19897">MARKGAPKKRLLLPDPIYNKVSVHMLVNRILKNGKKSIAYRIVYSVFRKISETMNQNPVEVWEKALNNVKPRVEVKPRRRAGSIQQVPRVMPSAERARAIAIRWIVSACQKKAGKDMISKLFSEISEASNKNGAAFRKKEELHKMALSNLMNSRRPDKIVKAITEQSEINDDVY</sequence>
<geneLocation type="chloroplast"/>
<dbReference type="EMBL" id="DQ630521">
    <property type="protein sequence ID" value="ABF60199.1"/>
    <property type="molecule type" value="Genomic_DNA"/>
</dbReference>
<dbReference type="RefSeq" id="YP_764401.1">
    <property type="nucleotide sequence ID" value="NC_008372.1"/>
</dbReference>
<dbReference type="SMR" id="Q06SG5"/>
<dbReference type="GeneID" id="4308430"/>
<dbReference type="GO" id="GO:0009507">
    <property type="term" value="C:chloroplast"/>
    <property type="evidence" value="ECO:0007669"/>
    <property type="project" value="UniProtKB-SubCell"/>
</dbReference>
<dbReference type="GO" id="GO:0015935">
    <property type="term" value="C:small ribosomal subunit"/>
    <property type="evidence" value="ECO:0007669"/>
    <property type="project" value="InterPro"/>
</dbReference>
<dbReference type="GO" id="GO:0019843">
    <property type="term" value="F:rRNA binding"/>
    <property type="evidence" value="ECO:0007669"/>
    <property type="project" value="UniProtKB-UniRule"/>
</dbReference>
<dbReference type="GO" id="GO:0003735">
    <property type="term" value="F:structural constituent of ribosome"/>
    <property type="evidence" value="ECO:0007669"/>
    <property type="project" value="InterPro"/>
</dbReference>
<dbReference type="GO" id="GO:0006412">
    <property type="term" value="P:translation"/>
    <property type="evidence" value="ECO:0007669"/>
    <property type="project" value="UniProtKB-UniRule"/>
</dbReference>
<dbReference type="Gene3D" id="1.10.455.10">
    <property type="entry name" value="Ribosomal protein S7 domain"/>
    <property type="match status" value="1"/>
</dbReference>
<dbReference type="HAMAP" id="MF_00480_B">
    <property type="entry name" value="Ribosomal_uS7_B"/>
    <property type="match status" value="1"/>
</dbReference>
<dbReference type="InterPro" id="IPR000235">
    <property type="entry name" value="Ribosomal_uS7"/>
</dbReference>
<dbReference type="InterPro" id="IPR005717">
    <property type="entry name" value="Ribosomal_uS7_bac/org-type"/>
</dbReference>
<dbReference type="InterPro" id="IPR023798">
    <property type="entry name" value="Ribosomal_uS7_dom"/>
</dbReference>
<dbReference type="InterPro" id="IPR036823">
    <property type="entry name" value="Ribosomal_uS7_dom_sf"/>
</dbReference>
<dbReference type="NCBIfam" id="TIGR01029">
    <property type="entry name" value="rpsG_bact"/>
    <property type="match status" value="1"/>
</dbReference>
<dbReference type="PANTHER" id="PTHR11205">
    <property type="entry name" value="RIBOSOMAL PROTEIN S7"/>
    <property type="match status" value="1"/>
</dbReference>
<dbReference type="Pfam" id="PF00177">
    <property type="entry name" value="Ribosomal_S7"/>
    <property type="match status" value="1"/>
</dbReference>
<dbReference type="SUPFAM" id="SSF47973">
    <property type="entry name" value="Ribosomal protein S7"/>
    <property type="match status" value="1"/>
</dbReference>
<comment type="function">
    <text evidence="1">One of the primary rRNA binding proteins, it binds directly to 16S rRNA where it nucleates assembly of the head domain of the 30S subunit.</text>
</comment>
<comment type="subunit">
    <text>Part of the 30S ribosomal subunit.</text>
</comment>
<comment type="subcellular location">
    <subcellularLocation>
        <location>Plastid</location>
        <location>Chloroplast</location>
    </subcellularLocation>
</comment>
<comment type="similarity">
    <text evidence="2">Belongs to the universal ribosomal protein uS7 family.</text>
</comment>
<evidence type="ECO:0000250" key="1"/>
<evidence type="ECO:0000305" key="2"/>
<gene>
    <name type="primary">rps7</name>
</gene>
<reference key="1">
    <citation type="journal article" date="2006" name="Mol. Genet. Genomics">
        <title>Distinctive architecture of the chloroplast genome in the chlorophycean green alga Stigeoclonium helveticum.</title>
        <authorList>
            <person name="Belanger A.-S."/>
            <person name="Brouard J.-S."/>
            <person name="Charlebois P."/>
            <person name="Otis C."/>
            <person name="Lemieux C."/>
            <person name="Turmel M."/>
        </authorList>
    </citation>
    <scope>NUCLEOTIDE SEQUENCE [LARGE SCALE GENOMIC DNA]</scope>
    <source>
        <strain>UTEX 441</strain>
    </source>
</reference>